<feature type="chain" id="PRO_1000018776" description="Phosphoribosylaminoimidazole-succinocarboxamide synthase">
    <location>
        <begin position="1"/>
        <end position="237"/>
    </location>
</feature>
<accession>Q5PLR9</accession>
<comment type="catalytic activity">
    <reaction evidence="1">
        <text>5-amino-1-(5-phospho-D-ribosyl)imidazole-4-carboxylate + L-aspartate + ATP = (2S)-2-[5-amino-1-(5-phospho-beta-D-ribosyl)imidazole-4-carboxamido]succinate + ADP + phosphate + 2 H(+)</text>
        <dbReference type="Rhea" id="RHEA:22628"/>
        <dbReference type="ChEBI" id="CHEBI:15378"/>
        <dbReference type="ChEBI" id="CHEBI:29991"/>
        <dbReference type="ChEBI" id="CHEBI:30616"/>
        <dbReference type="ChEBI" id="CHEBI:43474"/>
        <dbReference type="ChEBI" id="CHEBI:58443"/>
        <dbReference type="ChEBI" id="CHEBI:77657"/>
        <dbReference type="ChEBI" id="CHEBI:456216"/>
        <dbReference type="EC" id="6.3.2.6"/>
    </reaction>
</comment>
<comment type="pathway">
    <text evidence="1">Purine metabolism; IMP biosynthesis via de novo pathway; 5-amino-1-(5-phospho-D-ribosyl)imidazole-4-carboxamide from 5-amino-1-(5-phospho-D-ribosyl)imidazole-4-carboxylate: step 1/2.</text>
</comment>
<comment type="similarity">
    <text evidence="1">Belongs to the SAICAR synthetase family.</text>
</comment>
<evidence type="ECO:0000255" key="1">
    <source>
        <dbReference type="HAMAP-Rule" id="MF_00137"/>
    </source>
</evidence>
<protein>
    <recommendedName>
        <fullName evidence="1">Phosphoribosylaminoimidazole-succinocarboxamide synthase</fullName>
        <ecNumber evidence="1">6.3.2.6</ecNumber>
    </recommendedName>
    <alternativeName>
        <fullName evidence="1">SAICAR synthetase</fullName>
    </alternativeName>
</protein>
<proteinExistence type="inferred from homology"/>
<sequence>MQKQAELYRGKAKTVYSTENPDLLVLEFRNDTSAGDGARIEQFDRKGMVNNKFNHFIMTKLAEAGIPTQMERLLSDTECLVKKLEMVPVECVVRNRAAGSLVKRLGVEEGMELNPPIFDLFLKNDALHDPMVNSSYCETFGWVSQENLARMKELTYKANDVLKKLFDDAGLILVDFKLEFGLYKGEVVLGDEFSPDGSRLWDKETLDKMDKDRFRQSLGGLIEAYEAVAHRLGVKLD</sequence>
<gene>
    <name evidence="1" type="primary">purC</name>
    <name type="ordered locus">SPA0382</name>
</gene>
<name>PUR7_SALPA</name>
<keyword id="KW-0067">ATP-binding</keyword>
<keyword id="KW-0436">Ligase</keyword>
<keyword id="KW-0547">Nucleotide-binding</keyword>
<keyword id="KW-0658">Purine biosynthesis</keyword>
<reference key="1">
    <citation type="journal article" date="2004" name="Nat. Genet.">
        <title>Comparison of genome degradation in Paratyphi A and Typhi, human-restricted serovars of Salmonella enterica that cause typhoid.</title>
        <authorList>
            <person name="McClelland M."/>
            <person name="Sanderson K.E."/>
            <person name="Clifton S.W."/>
            <person name="Latreille P."/>
            <person name="Porwollik S."/>
            <person name="Sabo A."/>
            <person name="Meyer R."/>
            <person name="Bieri T."/>
            <person name="Ozersky P."/>
            <person name="McLellan M."/>
            <person name="Harkins C.R."/>
            <person name="Wang C."/>
            <person name="Nguyen C."/>
            <person name="Berghoff A."/>
            <person name="Elliott G."/>
            <person name="Kohlberg S."/>
            <person name="Strong C."/>
            <person name="Du F."/>
            <person name="Carter J."/>
            <person name="Kremizki C."/>
            <person name="Layman D."/>
            <person name="Leonard S."/>
            <person name="Sun H."/>
            <person name="Fulton L."/>
            <person name="Nash W."/>
            <person name="Miner T."/>
            <person name="Minx P."/>
            <person name="Delehaunty K."/>
            <person name="Fronick C."/>
            <person name="Magrini V."/>
            <person name="Nhan M."/>
            <person name="Warren W."/>
            <person name="Florea L."/>
            <person name="Spieth J."/>
            <person name="Wilson R.K."/>
        </authorList>
    </citation>
    <scope>NUCLEOTIDE SEQUENCE [LARGE SCALE GENOMIC DNA]</scope>
    <source>
        <strain>ATCC 9150 / SARB42</strain>
    </source>
</reference>
<dbReference type="EC" id="6.3.2.6" evidence="1"/>
<dbReference type="EMBL" id="CP000026">
    <property type="protein sequence ID" value="AAV76394.1"/>
    <property type="molecule type" value="Genomic_DNA"/>
</dbReference>
<dbReference type="RefSeq" id="WP_001171630.1">
    <property type="nucleotide sequence ID" value="NC_006511.1"/>
</dbReference>
<dbReference type="SMR" id="Q5PLR9"/>
<dbReference type="KEGG" id="spt:SPA0382"/>
<dbReference type="HOGENOM" id="CLU_061495_2_1_6"/>
<dbReference type="UniPathway" id="UPA00074">
    <property type="reaction ID" value="UER00131"/>
</dbReference>
<dbReference type="Proteomes" id="UP000008185">
    <property type="component" value="Chromosome"/>
</dbReference>
<dbReference type="GO" id="GO:0005829">
    <property type="term" value="C:cytosol"/>
    <property type="evidence" value="ECO:0007669"/>
    <property type="project" value="TreeGrafter"/>
</dbReference>
<dbReference type="GO" id="GO:0005524">
    <property type="term" value="F:ATP binding"/>
    <property type="evidence" value="ECO:0007669"/>
    <property type="project" value="UniProtKB-KW"/>
</dbReference>
<dbReference type="GO" id="GO:0004639">
    <property type="term" value="F:phosphoribosylaminoimidazolesuccinocarboxamide synthase activity"/>
    <property type="evidence" value="ECO:0007669"/>
    <property type="project" value="UniProtKB-UniRule"/>
</dbReference>
<dbReference type="GO" id="GO:0006189">
    <property type="term" value="P:'de novo' IMP biosynthetic process"/>
    <property type="evidence" value="ECO:0007669"/>
    <property type="project" value="UniProtKB-UniRule"/>
</dbReference>
<dbReference type="GO" id="GO:0009236">
    <property type="term" value="P:cobalamin biosynthetic process"/>
    <property type="evidence" value="ECO:0007669"/>
    <property type="project" value="InterPro"/>
</dbReference>
<dbReference type="CDD" id="cd01415">
    <property type="entry name" value="SAICAR_synt_PurC"/>
    <property type="match status" value="1"/>
</dbReference>
<dbReference type="FunFam" id="3.30.200.20:FF:000086">
    <property type="entry name" value="Phosphoribosylaminoimidazole-succinocarboxamide synthase"/>
    <property type="match status" value="1"/>
</dbReference>
<dbReference type="FunFam" id="3.30.470.20:FF:000006">
    <property type="entry name" value="Phosphoribosylaminoimidazole-succinocarboxamide synthase"/>
    <property type="match status" value="1"/>
</dbReference>
<dbReference type="Gene3D" id="3.30.470.20">
    <property type="entry name" value="ATP-grasp fold, B domain"/>
    <property type="match status" value="1"/>
</dbReference>
<dbReference type="Gene3D" id="3.30.200.20">
    <property type="entry name" value="Phosphorylase Kinase, domain 1"/>
    <property type="match status" value="1"/>
</dbReference>
<dbReference type="HAMAP" id="MF_00137">
    <property type="entry name" value="SAICAR_synth"/>
    <property type="match status" value="1"/>
</dbReference>
<dbReference type="InterPro" id="IPR028923">
    <property type="entry name" value="SAICAR_synt/ADE2_N"/>
</dbReference>
<dbReference type="InterPro" id="IPR033934">
    <property type="entry name" value="SAICAR_synt_PurC"/>
</dbReference>
<dbReference type="InterPro" id="IPR001636">
    <property type="entry name" value="SAICAR_synth"/>
</dbReference>
<dbReference type="InterPro" id="IPR050089">
    <property type="entry name" value="SAICAR_synthetase"/>
</dbReference>
<dbReference type="InterPro" id="IPR018236">
    <property type="entry name" value="SAICAR_synthetase_CS"/>
</dbReference>
<dbReference type="NCBIfam" id="TIGR00081">
    <property type="entry name" value="purC"/>
    <property type="match status" value="1"/>
</dbReference>
<dbReference type="PANTHER" id="PTHR43599">
    <property type="entry name" value="MULTIFUNCTIONAL PROTEIN ADE2"/>
    <property type="match status" value="1"/>
</dbReference>
<dbReference type="PANTHER" id="PTHR43599:SF3">
    <property type="entry name" value="SI:DKEY-6E2.2"/>
    <property type="match status" value="1"/>
</dbReference>
<dbReference type="Pfam" id="PF01259">
    <property type="entry name" value="SAICAR_synt"/>
    <property type="match status" value="1"/>
</dbReference>
<dbReference type="SUPFAM" id="SSF56104">
    <property type="entry name" value="SAICAR synthase-like"/>
    <property type="match status" value="1"/>
</dbReference>
<dbReference type="PROSITE" id="PS01057">
    <property type="entry name" value="SAICAR_SYNTHETASE_1"/>
    <property type="match status" value="1"/>
</dbReference>
<dbReference type="PROSITE" id="PS01058">
    <property type="entry name" value="SAICAR_SYNTHETASE_2"/>
    <property type="match status" value="1"/>
</dbReference>
<organism>
    <name type="scientific">Salmonella paratyphi A (strain ATCC 9150 / SARB42)</name>
    <dbReference type="NCBI Taxonomy" id="295319"/>
    <lineage>
        <taxon>Bacteria</taxon>
        <taxon>Pseudomonadati</taxon>
        <taxon>Pseudomonadota</taxon>
        <taxon>Gammaproteobacteria</taxon>
        <taxon>Enterobacterales</taxon>
        <taxon>Enterobacteriaceae</taxon>
        <taxon>Salmonella</taxon>
    </lineage>
</organism>